<organism>
    <name type="scientific">Shewanella piezotolerans (strain WP3 / JCM 13877)</name>
    <dbReference type="NCBI Taxonomy" id="225849"/>
    <lineage>
        <taxon>Bacteria</taxon>
        <taxon>Pseudomonadati</taxon>
        <taxon>Pseudomonadota</taxon>
        <taxon>Gammaproteobacteria</taxon>
        <taxon>Alteromonadales</taxon>
        <taxon>Shewanellaceae</taxon>
        <taxon>Shewanella</taxon>
    </lineage>
</organism>
<evidence type="ECO:0000255" key="1">
    <source>
        <dbReference type="HAMAP-Rule" id="MF_01599"/>
    </source>
</evidence>
<sequence length="528" mass="57786">MPVTMSQAFLDNFLGNSPKWFKFAILSFLVINPVVFYLNPFVAGWLLVLEFIFTLAMALKCYPLQPGGLLAIEAVIIGMTSPSQVLHEIEANLEVLLLLIFMVAGIYFMKQLLLFAFTKMITKVRSKIAVSIMCCVASAFLSAFLDALTVIAVIIAVAVGFYSIYHKVASGKNFNDSHDHTSDGQSQLCEEELEAFRGFLRNLLMHAGVGTALGGVCTMVGEPQNLIIAAQANWQFAEFALRMSPVTVPVFVAGVLTCFLVEKFRVFDYGKQLPDAVHKILSDYSAHEDAHRTKHDKIKLIIQALVGVWLIIGLAFHLASVGLIGLSVIILTTAFNGVTNEHQLGKAFEEALPFTALLAVFFAIVGVIIDQQLFAPVIQWALSYEGNTQLVIFYIAIGLLSMVSDNVFVGTVYINEVKAALLDGQITRDQFDLLAVAINTGTNLPSVATPNGQAAFLFLLTSAIAPLIRLSYGRMVWMALPYTIVLSIVGILAIQFGALEQMTQYFYDNNMLLHHTLQEVGNSAASAH</sequence>
<name>NHAB_SHEPW</name>
<comment type="function">
    <text evidence="1">Na(+)/H(+) antiporter that extrudes sodium in exchange for external protons.</text>
</comment>
<comment type="catalytic activity">
    <reaction evidence="1">
        <text>2 Na(+)(in) + 3 H(+)(out) = 2 Na(+)(out) + 3 H(+)(in)</text>
        <dbReference type="Rhea" id="RHEA:29247"/>
        <dbReference type="ChEBI" id="CHEBI:15378"/>
        <dbReference type="ChEBI" id="CHEBI:29101"/>
    </reaction>
    <physiologicalReaction direction="left-to-right" evidence="1">
        <dbReference type="Rhea" id="RHEA:29248"/>
    </physiologicalReaction>
</comment>
<comment type="subcellular location">
    <subcellularLocation>
        <location evidence="1">Cell inner membrane</location>
        <topology evidence="1">Multi-pass membrane protein</topology>
    </subcellularLocation>
</comment>
<comment type="similarity">
    <text evidence="1">Belongs to the NhaB Na(+)/H(+) (TC 2.A.34) antiporter family.</text>
</comment>
<dbReference type="EMBL" id="CP000472">
    <property type="protein sequence ID" value="ACJ29513.1"/>
    <property type="molecule type" value="Genomic_DNA"/>
</dbReference>
<dbReference type="RefSeq" id="WP_020912867.1">
    <property type="nucleotide sequence ID" value="NC_011566.1"/>
</dbReference>
<dbReference type="SMR" id="B8CPD7"/>
<dbReference type="STRING" id="225849.swp_2787"/>
<dbReference type="KEGG" id="swp:swp_2787"/>
<dbReference type="eggNOG" id="COG3067">
    <property type="taxonomic scope" value="Bacteria"/>
</dbReference>
<dbReference type="HOGENOM" id="CLU_041110_0_0_6"/>
<dbReference type="OrthoDB" id="5288732at2"/>
<dbReference type="Proteomes" id="UP000000753">
    <property type="component" value="Chromosome"/>
</dbReference>
<dbReference type="GO" id="GO:0005886">
    <property type="term" value="C:plasma membrane"/>
    <property type="evidence" value="ECO:0007669"/>
    <property type="project" value="UniProtKB-SubCell"/>
</dbReference>
<dbReference type="GO" id="GO:0015385">
    <property type="term" value="F:sodium:proton antiporter activity"/>
    <property type="evidence" value="ECO:0007669"/>
    <property type="project" value="InterPro"/>
</dbReference>
<dbReference type="HAMAP" id="MF_01599">
    <property type="entry name" value="NhaB"/>
    <property type="match status" value="1"/>
</dbReference>
<dbReference type="InterPro" id="IPR004671">
    <property type="entry name" value="Na+/H+_antiporter_NhaB"/>
</dbReference>
<dbReference type="NCBIfam" id="TIGR00774">
    <property type="entry name" value="NhaB"/>
    <property type="match status" value="1"/>
</dbReference>
<dbReference type="NCBIfam" id="NF007093">
    <property type="entry name" value="PRK09547.1"/>
    <property type="match status" value="1"/>
</dbReference>
<dbReference type="PANTHER" id="PTHR43302:SF1">
    <property type="entry name" value="NA(+)_H(+) ANTIPORTER NHAB"/>
    <property type="match status" value="1"/>
</dbReference>
<dbReference type="PANTHER" id="PTHR43302">
    <property type="entry name" value="TRANSPORTER ARSB-RELATED"/>
    <property type="match status" value="1"/>
</dbReference>
<dbReference type="Pfam" id="PF06450">
    <property type="entry name" value="NhaB"/>
    <property type="match status" value="1"/>
</dbReference>
<keyword id="KW-0050">Antiport</keyword>
<keyword id="KW-0997">Cell inner membrane</keyword>
<keyword id="KW-1003">Cell membrane</keyword>
<keyword id="KW-0406">Ion transport</keyword>
<keyword id="KW-0472">Membrane</keyword>
<keyword id="KW-0915">Sodium</keyword>
<keyword id="KW-0739">Sodium transport</keyword>
<keyword id="KW-0812">Transmembrane</keyword>
<keyword id="KW-1133">Transmembrane helix</keyword>
<keyword id="KW-0813">Transport</keyword>
<feature type="chain" id="PRO_1000191545" description="Na(+)/H(+) antiporter NhaB">
    <location>
        <begin position="1"/>
        <end position="528"/>
    </location>
</feature>
<feature type="transmembrane region" description="Helical" evidence="1">
    <location>
        <begin position="23"/>
        <end position="45"/>
    </location>
</feature>
<feature type="transmembrane region" description="Helical" evidence="1">
    <location>
        <begin position="66"/>
        <end position="86"/>
    </location>
</feature>
<feature type="transmembrane region" description="Helical" evidence="1">
    <location>
        <begin position="95"/>
        <end position="115"/>
    </location>
</feature>
<feature type="transmembrane region" description="Helical" evidence="1">
    <location>
        <begin position="139"/>
        <end position="159"/>
    </location>
</feature>
<feature type="transmembrane region" description="Helical" evidence="1">
    <location>
        <begin position="203"/>
        <end position="223"/>
    </location>
</feature>
<feature type="transmembrane region" description="Helical" evidence="1">
    <location>
        <begin position="241"/>
        <end position="261"/>
    </location>
</feature>
<feature type="transmembrane region" description="Helical" evidence="1">
    <location>
        <begin position="310"/>
        <end position="330"/>
    </location>
</feature>
<feature type="transmembrane region" description="Helical" evidence="1">
    <location>
        <begin position="349"/>
        <end position="369"/>
    </location>
</feature>
<feature type="transmembrane region" description="Helical" evidence="1">
    <location>
        <begin position="390"/>
        <end position="410"/>
    </location>
</feature>
<feature type="transmembrane region" description="Helical" evidence="1">
    <location>
        <begin position="448"/>
        <end position="468"/>
    </location>
</feature>
<feature type="transmembrane region" description="Helical" evidence="1">
    <location>
        <begin position="476"/>
        <end position="496"/>
    </location>
</feature>
<protein>
    <recommendedName>
        <fullName evidence="1">Na(+)/H(+) antiporter NhaB</fullName>
    </recommendedName>
    <alternativeName>
        <fullName evidence="1">Sodium/proton antiporter NhaB</fullName>
    </alternativeName>
</protein>
<reference key="1">
    <citation type="journal article" date="2008" name="PLoS ONE">
        <title>Environmental adaptation: genomic analysis of the piezotolerant and psychrotolerant deep-sea iron reducing bacterium Shewanella piezotolerans WP3.</title>
        <authorList>
            <person name="Wang F."/>
            <person name="Wang J."/>
            <person name="Jian H."/>
            <person name="Zhang B."/>
            <person name="Li S."/>
            <person name="Wang F."/>
            <person name="Zeng X."/>
            <person name="Gao L."/>
            <person name="Bartlett D.H."/>
            <person name="Yu J."/>
            <person name="Hu S."/>
            <person name="Xiao X."/>
        </authorList>
    </citation>
    <scope>NUCLEOTIDE SEQUENCE [LARGE SCALE GENOMIC DNA]</scope>
    <source>
        <strain>WP3 / JCM 13877</strain>
    </source>
</reference>
<gene>
    <name evidence="1" type="primary">nhaB</name>
    <name type="ordered locus">swp_2787</name>
</gene>
<proteinExistence type="inferred from homology"/>
<accession>B8CPD7</accession>